<accession>A5DXV0</accession>
<gene>
    <name type="primary">RRT14</name>
    <name type="ORF">LELG_02187</name>
</gene>
<evidence type="ECO:0000250" key="1"/>
<evidence type="ECO:0000256" key="2">
    <source>
        <dbReference type="SAM" id="MobiDB-lite"/>
    </source>
</evidence>
<evidence type="ECO:0000305" key="3"/>
<keyword id="KW-0539">Nucleus</keyword>
<keyword id="KW-1185">Reference proteome</keyword>
<keyword id="KW-0804">Transcription</keyword>
<keyword id="KW-0805">Transcription regulation</keyword>
<protein>
    <recommendedName>
        <fullName>Regulator of rDNA transcription 14</fullName>
    </recommendedName>
</protein>
<name>RRT14_LODEL</name>
<organism>
    <name type="scientific">Lodderomyces elongisporus (strain ATCC 11503 / CBS 2605 / JCM 1781 / NBRC 1676 / NRRL YB-4239)</name>
    <name type="common">Yeast</name>
    <name type="synonym">Saccharomyces elongisporus</name>
    <dbReference type="NCBI Taxonomy" id="379508"/>
    <lineage>
        <taxon>Eukaryota</taxon>
        <taxon>Fungi</taxon>
        <taxon>Dikarya</taxon>
        <taxon>Ascomycota</taxon>
        <taxon>Saccharomycotina</taxon>
        <taxon>Pichiomycetes</taxon>
        <taxon>Debaryomycetaceae</taxon>
        <taxon>Candida/Lodderomyces clade</taxon>
        <taxon>Lodderomyces</taxon>
    </lineage>
</organism>
<sequence length="240" mass="27328">MASFTSNASKHQAELTVNRMFADILHTQPLRSAKSTTSNKSKSASKFGNDRKALSMPTPLSSTQILSQQLQPQLQQTRLSLKTGKSSQNNNKVKKLLKKKHEQDKKFQKFIKYSMIKNKMSTDPESLTLEEHKYLKKLAKRNINALQKYSKIDDFEIEQEMSSVKNELLKDLAPKKQTRLRKKLAIPAKKGSARSNANNQINDFDYERKLQKGLISAPGLTPGLAPVDYDDDEEEEEEED</sequence>
<feature type="chain" id="PRO_0000404344" description="Regulator of rDNA transcription 14">
    <location>
        <begin position="1"/>
        <end position="240"/>
    </location>
</feature>
<feature type="region of interest" description="Disordered" evidence="2">
    <location>
        <begin position="28"/>
        <end position="67"/>
    </location>
</feature>
<feature type="region of interest" description="Disordered" evidence="2">
    <location>
        <begin position="215"/>
        <end position="240"/>
    </location>
</feature>
<feature type="compositionally biased region" description="Low complexity" evidence="2">
    <location>
        <begin position="32"/>
        <end position="46"/>
    </location>
</feature>
<feature type="compositionally biased region" description="Low complexity" evidence="2">
    <location>
        <begin position="58"/>
        <end position="67"/>
    </location>
</feature>
<feature type="compositionally biased region" description="Acidic residues" evidence="2">
    <location>
        <begin position="228"/>
        <end position="240"/>
    </location>
</feature>
<proteinExistence type="inferred from homology"/>
<reference key="1">
    <citation type="journal article" date="2009" name="Nature">
        <title>Evolution of pathogenicity and sexual reproduction in eight Candida genomes.</title>
        <authorList>
            <person name="Butler G."/>
            <person name="Rasmussen M.D."/>
            <person name="Lin M.F."/>
            <person name="Santos M.A.S."/>
            <person name="Sakthikumar S."/>
            <person name="Munro C.A."/>
            <person name="Rheinbay E."/>
            <person name="Grabherr M."/>
            <person name="Forche A."/>
            <person name="Reedy J.L."/>
            <person name="Agrafioti I."/>
            <person name="Arnaud M.B."/>
            <person name="Bates S."/>
            <person name="Brown A.J.P."/>
            <person name="Brunke S."/>
            <person name="Costanzo M.C."/>
            <person name="Fitzpatrick D.A."/>
            <person name="de Groot P.W.J."/>
            <person name="Harris D."/>
            <person name="Hoyer L.L."/>
            <person name="Hube B."/>
            <person name="Klis F.M."/>
            <person name="Kodira C."/>
            <person name="Lennard N."/>
            <person name="Logue M.E."/>
            <person name="Martin R."/>
            <person name="Neiman A.M."/>
            <person name="Nikolaou E."/>
            <person name="Quail M.A."/>
            <person name="Quinn J."/>
            <person name="Santos M.C."/>
            <person name="Schmitzberger F.F."/>
            <person name="Sherlock G."/>
            <person name="Shah P."/>
            <person name="Silverstein K.A.T."/>
            <person name="Skrzypek M.S."/>
            <person name="Soll D."/>
            <person name="Staggs R."/>
            <person name="Stansfield I."/>
            <person name="Stumpf M.P.H."/>
            <person name="Sudbery P.E."/>
            <person name="Srikantha T."/>
            <person name="Zeng Q."/>
            <person name="Berman J."/>
            <person name="Berriman M."/>
            <person name="Heitman J."/>
            <person name="Gow N.A.R."/>
            <person name="Lorenz M.C."/>
            <person name="Birren B.W."/>
            <person name="Kellis M."/>
            <person name="Cuomo C.A."/>
        </authorList>
    </citation>
    <scope>NUCLEOTIDE SEQUENCE [LARGE SCALE GENOMIC DNA]</scope>
    <source>
        <strain>ATCC 11503 / BCRC 21390 / CBS 2605 / JCM 1781 / NBRC 1676 / NRRL YB-4239</strain>
    </source>
</reference>
<comment type="function">
    <text evidence="1">Involved in ribosome biogenesis, probably through modulation of rDNA transcription.</text>
</comment>
<comment type="subcellular location">
    <subcellularLocation>
        <location evidence="1">Nucleus</location>
        <location evidence="1">Nucleolus</location>
    </subcellularLocation>
</comment>
<comment type="similarity">
    <text evidence="3">Belongs to the RRT14 family.</text>
</comment>
<dbReference type="EMBL" id="CH981525">
    <property type="protein sequence ID" value="EDK44008.1"/>
    <property type="molecule type" value="Genomic_DNA"/>
</dbReference>
<dbReference type="RefSeq" id="XP_001527358.1">
    <property type="nucleotide sequence ID" value="XM_001527308.1"/>
</dbReference>
<dbReference type="SMR" id="A5DXV0"/>
<dbReference type="FunCoup" id="A5DXV0">
    <property type="interactions" value="247"/>
</dbReference>
<dbReference type="STRING" id="379508.A5DXV0"/>
<dbReference type="GeneID" id="5233657"/>
<dbReference type="KEGG" id="lel:PVL30_002213"/>
<dbReference type="VEuPathDB" id="FungiDB:LELG_02187"/>
<dbReference type="eggNOG" id="ENOG502S1G1">
    <property type="taxonomic scope" value="Eukaryota"/>
</dbReference>
<dbReference type="HOGENOM" id="CLU_095038_0_0_1"/>
<dbReference type="InParanoid" id="A5DXV0"/>
<dbReference type="OMA" id="LNNTKQV"/>
<dbReference type="OrthoDB" id="4069371at2759"/>
<dbReference type="Proteomes" id="UP000001996">
    <property type="component" value="Unassembled WGS sequence"/>
</dbReference>
<dbReference type="GO" id="GO:0005730">
    <property type="term" value="C:nucleolus"/>
    <property type="evidence" value="ECO:0007669"/>
    <property type="project" value="UniProtKB-SubCell"/>
</dbReference>
<dbReference type="InterPro" id="IPR031404">
    <property type="entry name" value="Rrt14"/>
</dbReference>
<dbReference type="Pfam" id="PF17075">
    <property type="entry name" value="RRT14"/>
    <property type="match status" value="1"/>
</dbReference>